<feature type="chain" id="PRO_1000129272" description="Adenosylhomocysteinase">
    <location>
        <begin position="1"/>
        <end position="466"/>
    </location>
</feature>
<feature type="binding site" evidence="1">
    <location>
        <position position="57"/>
    </location>
    <ligand>
        <name>substrate</name>
    </ligand>
</feature>
<feature type="binding site" evidence="1">
    <location>
        <position position="132"/>
    </location>
    <ligand>
        <name>substrate</name>
    </ligand>
</feature>
<feature type="binding site" evidence="1">
    <location>
        <position position="192"/>
    </location>
    <ligand>
        <name>substrate</name>
    </ligand>
</feature>
<feature type="binding site" evidence="1">
    <location>
        <begin position="193"/>
        <end position="195"/>
    </location>
    <ligand>
        <name>NAD(+)</name>
        <dbReference type="ChEBI" id="CHEBI:57540"/>
    </ligand>
</feature>
<feature type="binding site" evidence="1">
    <location>
        <position position="222"/>
    </location>
    <ligand>
        <name>substrate</name>
    </ligand>
</feature>
<feature type="binding site" evidence="1">
    <location>
        <position position="226"/>
    </location>
    <ligand>
        <name>substrate</name>
    </ligand>
</feature>
<feature type="binding site" evidence="1">
    <location>
        <position position="227"/>
    </location>
    <ligand>
        <name>NAD(+)</name>
        <dbReference type="ChEBI" id="CHEBI:57540"/>
    </ligand>
</feature>
<feature type="binding site" evidence="1">
    <location>
        <begin position="256"/>
        <end position="261"/>
    </location>
    <ligand>
        <name>NAD(+)</name>
        <dbReference type="ChEBI" id="CHEBI:57540"/>
    </ligand>
</feature>
<feature type="binding site" evidence="1">
    <location>
        <position position="279"/>
    </location>
    <ligand>
        <name>NAD(+)</name>
        <dbReference type="ChEBI" id="CHEBI:57540"/>
    </ligand>
</feature>
<feature type="binding site" evidence="1">
    <location>
        <position position="314"/>
    </location>
    <ligand>
        <name>NAD(+)</name>
        <dbReference type="ChEBI" id="CHEBI:57540"/>
    </ligand>
</feature>
<feature type="binding site" evidence="1">
    <location>
        <begin position="335"/>
        <end position="337"/>
    </location>
    <ligand>
        <name>NAD(+)</name>
        <dbReference type="ChEBI" id="CHEBI:57540"/>
    </ligand>
</feature>
<feature type="binding site" evidence="1">
    <location>
        <position position="380"/>
    </location>
    <ligand>
        <name>NAD(+)</name>
        <dbReference type="ChEBI" id="CHEBI:57540"/>
    </ligand>
</feature>
<comment type="function">
    <text evidence="1">May play a key role in the regulation of the intracellular concentration of adenosylhomocysteine.</text>
</comment>
<comment type="catalytic activity">
    <reaction evidence="1">
        <text>S-adenosyl-L-homocysteine + H2O = L-homocysteine + adenosine</text>
        <dbReference type="Rhea" id="RHEA:21708"/>
        <dbReference type="ChEBI" id="CHEBI:15377"/>
        <dbReference type="ChEBI" id="CHEBI:16335"/>
        <dbReference type="ChEBI" id="CHEBI:57856"/>
        <dbReference type="ChEBI" id="CHEBI:58199"/>
        <dbReference type="EC" id="3.13.2.1"/>
    </reaction>
</comment>
<comment type="cofactor">
    <cofactor evidence="1">
        <name>NAD(+)</name>
        <dbReference type="ChEBI" id="CHEBI:57540"/>
    </cofactor>
    <text evidence="1">Binds 1 NAD(+) per subunit.</text>
</comment>
<comment type="pathway">
    <text evidence="1">Amino-acid biosynthesis; L-homocysteine biosynthesis; L-homocysteine from S-adenosyl-L-homocysteine: step 1/1.</text>
</comment>
<comment type="subcellular location">
    <subcellularLocation>
        <location evidence="1">Cytoplasm</location>
    </subcellularLocation>
</comment>
<comment type="similarity">
    <text evidence="1">Belongs to the adenosylhomocysteinase family.</text>
</comment>
<gene>
    <name evidence="1" type="primary">ahcY</name>
    <name type="ordered locus">BAbS19_I19640</name>
</gene>
<name>SAHH_BRUA1</name>
<reference key="1">
    <citation type="journal article" date="2008" name="PLoS ONE">
        <title>Genome sequence of Brucella abortus vaccine strain S19 compared to virulent strains yields candidate virulence genes.</title>
        <authorList>
            <person name="Crasta O.R."/>
            <person name="Folkerts O."/>
            <person name="Fei Z."/>
            <person name="Mane S.P."/>
            <person name="Evans C."/>
            <person name="Martino-Catt S."/>
            <person name="Bricker B."/>
            <person name="Yu G."/>
            <person name="Du L."/>
            <person name="Sobral B.W."/>
        </authorList>
    </citation>
    <scope>NUCLEOTIDE SEQUENCE [LARGE SCALE GENOMIC DNA]</scope>
    <source>
        <strain>S19</strain>
    </source>
</reference>
<keyword id="KW-0963">Cytoplasm</keyword>
<keyword id="KW-0378">Hydrolase</keyword>
<keyword id="KW-0520">NAD</keyword>
<keyword id="KW-0554">One-carbon metabolism</keyword>
<evidence type="ECO:0000255" key="1">
    <source>
        <dbReference type="HAMAP-Rule" id="MF_00563"/>
    </source>
</evidence>
<organism>
    <name type="scientific">Brucella abortus (strain S19)</name>
    <dbReference type="NCBI Taxonomy" id="430066"/>
    <lineage>
        <taxon>Bacteria</taxon>
        <taxon>Pseudomonadati</taxon>
        <taxon>Pseudomonadota</taxon>
        <taxon>Alphaproteobacteria</taxon>
        <taxon>Hyphomicrobiales</taxon>
        <taxon>Brucellaceae</taxon>
        <taxon>Brucella/Ochrobactrum group</taxon>
        <taxon>Brucella</taxon>
    </lineage>
</organism>
<protein>
    <recommendedName>
        <fullName evidence="1">Adenosylhomocysteinase</fullName>
        <ecNumber evidence="1">3.13.2.1</ecNumber>
    </recommendedName>
    <alternativeName>
        <fullName evidence="1">S-adenosyl-L-homocysteine hydrolase</fullName>
        <shortName evidence="1">AdoHcyase</shortName>
    </alternativeName>
</protein>
<accession>B2S994</accession>
<proteinExistence type="inferred from homology"/>
<dbReference type="EC" id="3.13.2.1" evidence="1"/>
<dbReference type="EMBL" id="CP000887">
    <property type="protein sequence ID" value="ACD73446.1"/>
    <property type="molecule type" value="Genomic_DNA"/>
</dbReference>
<dbReference type="RefSeq" id="WP_002965162.1">
    <property type="nucleotide sequence ID" value="NC_010742.1"/>
</dbReference>
<dbReference type="SMR" id="B2S994"/>
<dbReference type="GeneID" id="97534642"/>
<dbReference type="KEGG" id="bmc:BAbS19_I19640"/>
<dbReference type="HOGENOM" id="CLU_025194_2_0_5"/>
<dbReference type="UniPathway" id="UPA00314">
    <property type="reaction ID" value="UER00076"/>
</dbReference>
<dbReference type="Proteomes" id="UP000002565">
    <property type="component" value="Chromosome 1"/>
</dbReference>
<dbReference type="GO" id="GO:0005829">
    <property type="term" value="C:cytosol"/>
    <property type="evidence" value="ECO:0007669"/>
    <property type="project" value="TreeGrafter"/>
</dbReference>
<dbReference type="GO" id="GO:0004013">
    <property type="term" value="F:adenosylhomocysteinase activity"/>
    <property type="evidence" value="ECO:0007669"/>
    <property type="project" value="UniProtKB-UniRule"/>
</dbReference>
<dbReference type="GO" id="GO:0071269">
    <property type="term" value="P:L-homocysteine biosynthetic process"/>
    <property type="evidence" value="ECO:0007669"/>
    <property type="project" value="UniProtKB-UniRule"/>
</dbReference>
<dbReference type="GO" id="GO:0006730">
    <property type="term" value="P:one-carbon metabolic process"/>
    <property type="evidence" value="ECO:0007669"/>
    <property type="project" value="UniProtKB-KW"/>
</dbReference>
<dbReference type="GO" id="GO:0033353">
    <property type="term" value="P:S-adenosylmethionine cycle"/>
    <property type="evidence" value="ECO:0007669"/>
    <property type="project" value="TreeGrafter"/>
</dbReference>
<dbReference type="CDD" id="cd00401">
    <property type="entry name" value="SAHH"/>
    <property type="match status" value="1"/>
</dbReference>
<dbReference type="FunFam" id="3.40.50.720:FF:000004">
    <property type="entry name" value="Adenosylhomocysteinase"/>
    <property type="match status" value="1"/>
</dbReference>
<dbReference type="Gene3D" id="3.40.50.1480">
    <property type="entry name" value="Adenosylhomocysteinase-like"/>
    <property type="match status" value="1"/>
</dbReference>
<dbReference type="Gene3D" id="3.40.50.720">
    <property type="entry name" value="NAD(P)-binding Rossmann-like Domain"/>
    <property type="match status" value="1"/>
</dbReference>
<dbReference type="HAMAP" id="MF_00563">
    <property type="entry name" value="AdoHcyase"/>
    <property type="match status" value="1"/>
</dbReference>
<dbReference type="InterPro" id="IPR042172">
    <property type="entry name" value="Adenosylhomocyst_ase-like_sf"/>
</dbReference>
<dbReference type="InterPro" id="IPR000043">
    <property type="entry name" value="Adenosylhomocysteinase-like"/>
</dbReference>
<dbReference type="InterPro" id="IPR015878">
    <property type="entry name" value="Ado_hCys_hydrolase_NAD-bd"/>
</dbReference>
<dbReference type="InterPro" id="IPR036291">
    <property type="entry name" value="NAD(P)-bd_dom_sf"/>
</dbReference>
<dbReference type="InterPro" id="IPR020082">
    <property type="entry name" value="S-Ado-L-homoCys_hydrolase_CS"/>
</dbReference>
<dbReference type="NCBIfam" id="TIGR00936">
    <property type="entry name" value="ahcY"/>
    <property type="match status" value="1"/>
</dbReference>
<dbReference type="NCBIfam" id="NF004005">
    <property type="entry name" value="PRK05476.2-3"/>
    <property type="match status" value="1"/>
</dbReference>
<dbReference type="PANTHER" id="PTHR23420">
    <property type="entry name" value="ADENOSYLHOMOCYSTEINASE"/>
    <property type="match status" value="1"/>
</dbReference>
<dbReference type="PANTHER" id="PTHR23420:SF0">
    <property type="entry name" value="ADENOSYLHOMOCYSTEINASE"/>
    <property type="match status" value="1"/>
</dbReference>
<dbReference type="Pfam" id="PF05221">
    <property type="entry name" value="AdoHcyase"/>
    <property type="match status" value="1"/>
</dbReference>
<dbReference type="Pfam" id="PF00670">
    <property type="entry name" value="AdoHcyase_NAD"/>
    <property type="match status" value="1"/>
</dbReference>
<dbReference type="PIRSF" id="PIRSF001109">
    <property type="entry name" value="Ad_hcy_hydrolase"/>
    <property type="match status" value="1"/>
</dbReference>
<dbReference type="SMART" id="SM00996">
    <property type="entry name" value="AdoHcyase"/>
    <property type="match status" value="1"/>
</dbReference>
<dbReference type="SMART" id="SM00997">
    <property type="entry name" value="AdoHcyase_NAD"/>
    <property type="match status" value="1"/>
</dbReference>
<dbReference type="SUPFAM" id="SSF52283">
    <property type="entry name" value="Formate/glycerate dehydrogenase catalytic domain-like"/>
    <property type="match status" value="1"/>
</dbReference>
<dbReference type="SUPFAM" id="SSF51735">
    <property type="entry name" value="NAD(P)-binding Rossmann-fold domains"/>
    <property type="match status" value="1"/>
</dbReference>
<dbReference type="PROSITE" id="PS00738">
    <property type="entry name" value="ADOHCYASE_1"/>
    <property type="match status" value="1"/>
</dbReference>
<dbReference type="PROSITE" id="PS00739">
    <property type="entry name" value="ADOHCYASE_2"/>
    <property type="match status" value="1"/>
</dbReference>
<sequence length="466" mass="50791">MTASQDFVVKDISLADWGRKELDIAETEMPGLMAAREEFGKSQPLKGARISGSLHMTIQTAVLIETLKVLGAEVRWASCNIFSTQDHAAAAIAATGTPVFAVKGETLEEYWTYTDQIFQWPDGEPSNMILDDGGDATMYILIGARAEAGEDVLSNPQSEEEEVLFAQIKKRMAATPGFFTKQRAAIKGVTEETTTGVNRLYQLQKKGLLPFPAINVNDSVTKSKFDNKYGCKESLVDGIRRGTDVMMAGKVAVVCGYGDVGKGSAQSLAGAGARVKVTEVDPICALQAAMDGFEVVTLDDAASTADIVVTTTGNKDVITIDHMRKMKDMCIVGNIGHFDNEIQVAALRNLKWTNVKPQVDLIEFPDGKRLILLSEGRLLNLGNATGHPSFVMSASFTNQVLGQIELFTRTDAYKNEVYVLPKHLDEKVARLHLDKLGAKLTVLSEEQAAYIGVTPQGPFKSEHYRY</sequence>